<gene>
    <name evidence="1" type="primary">codY</name>
    <name type="ordered locus">RBAM_016000</name>
</gene>
<evidence type="ECO:0000255" key="1">
    <source>
        <dbReference type="HAMAP-Rule" id="MF_00621"/>
    </source>
</evidence>
<sequence length="259" mass="29056">MALLQKTRIINSMLQAAAGKPVNFKEMAETLRDVIDSNIFVVSRRGKLLGYSINQQIENDRMKKMLEDRQFPEEYTRNLFNVPETSSNLDINSEYTAFPVENRDLFQAGLTTIVPIIGGGERLGTLILSRLQDQFEDDDLILAEYGATVVGMEILREKAEEIEEEARSKAVVQMAISSLSYSELEAIEHIFEELDGNEGLLVASKIADRVGITRSVIVNALRKLESAGVIESRSLGMKGTYIKVLNNKFLIELENLKSH</sequence>
<reference key="1">
    <citation type="journal article" date="2007" name="Nat. Biotechnol.">
        <title>Comparative analysis of the complete genome sequence of the plant growth-promoting bacterium Bacillus amyloliquefaciens FZB42.</title>
        <authorList>
            <person name="Chen X.H."/>
            <person name="Koumoutsi A."/>
            <person name="Scholz R."/>
            <person name="Eisenreich A."/>
            <person name="Schneider K."/>
            <person name="Heinemeyer I."/>
            <person name="Morgenstern B."/>
            <person name="Voss B."/>
            <person name="Hess W.R."/>
            <person name="Reva O."/>
            <person name="Junge H."/>
            <person name="Voigt B."/>
            <person name="Jungblut P.R."/>
            <person name="Vater J."/>
            <person name="Suessmuth R."/>
            <person name="Liesegang H."/>
            <person name="Strittmatter A."/>
            <person name="Gottschalk G."/>
            <person name="Borriss R."/>
        </authorList>
    </citation>
    <scope>NUCLEOTIDE SEQUENCE [LARGE SCALE GENOMIC DNA]</scope>
    <source>
        <strain>DSM 23117 / BGSC 10A6 / LMG 26770 / FZB42</strain>
    </source>
</reference>
<protein>
    <recommendedName>
        <fullName evidence="1">Global transcriptional regulator CodY</fullName>
    </recommendedName>
</protein>
<accession>A7Z4N7</accession>
<comment type="function">
    <text evidence="1">DNA-binding global transcriptional regulator which is involved in the adaptive response to starvation and acts by directly or indirectly controlling the expression of numerous genes in response to nutrient availability. During rapid exponential growth, CodY is highly active and represses genes whose products allow adaptation to nutrient depletion.</text>
</comment>
<comment type="subcellular location">
    <subcellularLocation>
        <location evidence="1">Cytoplasm</location>
    </subcellularLocation>
</comment>
<comment type="similarity">
    <text evidence="1">Belongs to the CodY family.</text>
</comment>
<proteinExistence type="inferred from homology"/>
<organism>
    <name type="scientific">Bacillus velezensis (strain DSM 23117 / BGSC 10A6 / LMG 26770 / FZB42)</name>
    <name type="common">Bacillus amyloliquefaciens subsp. plantarum</name>
    <dbReference type="NCBI Taxonomy" id="326423"/>
    <lineage>
        <taxon>Bacteria</taxon>
        <taxon>Bacillati</taxon>
        <taxon>Bacillota</taxon>
        <taxon>Bacilli</taxon>
        <taxon>Bacillales</taxon>
        <taxon>Bacillaceae</taxon>
        <taxon>Bacillus</taxon>
        <taxon>Bacillus amyloliquefaciens group</taxon>
    </lineage>
</organism>
<feature type="chain" id="PRO_1000051530" description="Global transcriptional regulator CodY">
    <location>
        <begin position="1"/>
        <end position="259"/>
    </location>
</feature>
<feature type="DNA-binding region" description="H-T-H motif" evidence="1">
    <location>
        <begin position="203"/>
        <end position="222"/>
    </location>
</feature>
<feature type="region of interest" description="GAF domain" evidence="1">
    <location>
        <begin position="1"/>
        <end position="155"/>
    </location>
</feature>
<feature type="modified residue" description="Phosphoserine" evidence="1">
    <location>
        <position position="215"/>
    </location>
</feature>
<name>CODY_BACVZ</name>
<dbReference type="EMBL" id="CP000560">
    <property type="protein sequence ID" value="ABS73963.1"/>
    <property type="molecule type" value="Genomic_DNA"/>
</dbReference>
<dbReference type="RefSeq" id="WP_003154263.1">
    <property type="nucleotide sequence ID" value="NC_009725.2"/>
</dbReference>
<dbReference type="SMR" id="A7Z4N7"/>
<dbReference type="GeneID" id="93080733"/>
<dbReference type="KEGG" id="bay:RBAM_016000"/>
<dbReference type="HOGENOM" id="CLU_089581_0_0_9"/>
<dbReference type="Proteomes" id="UP000001120">
    <property type="component" value="Chromosome"/>
</dbReference>
<dbReference type="GO" id="GO:0005737">
    <property type="term" value="C:cytoplasm"/>
    <property type="evidence" value="ECO:0007669"/>
    <property type="project" value="UniProtKB-SubCell"/>
</dbReference>
<dbReference type="GO" id="GO:0003677">
    <property type="term" value="F:DNA binding"/>
    <property type="evidence" value="ECO:0007669"/>
    <property type="project" value="UniProtKB-UniRule"/>
</dbReference>
<dbReference type="GO" id="GO:0003700">
    <property type="term" value="F:DNA-binding transcription factor activity"/>
    <property type="evidence" value="ECO:0007669"/>
    <property type="project" value="InterPro"/>
</dbReference>
<dbReference type="GO" id="GO:0005525">
    <property type="term" value="F:GTP binding"/>
    <property type="evidence" value="ECO:0007669"/>
    <property type="project" value="InterPro"/>
</dbReference>
<dbReference type="GO" id="GO:0045892">
    <property type="term" value="P:negative regulation of DNA-templated transcription"/>
    <property type="evidence" value="ECO:0007669"/>
    <property type="project" value="UniProtKB-UniRule"/>
</dbReference>
<dbReference type="FunFam" id="1.10.10.10:FF:000034">
    <property type="entry name" value="GTP-sensing transcriptional pleiotropic repressor CodY"/>
    <property type="match status" value="1"/>
</dbReference>
<dbReference type="FunFam" id="3.30.450.40:FF:000003">
    <property type="entry name" value="GTP-sensing transcriptional pleiotropic repressor CodY"/>
    <property type="match status" value="1"/>
</dbReference>
<dbReference type="Gene3D" id="3.30.450.40">
    <property type="match status" value="1"/>
</dbReference>
<dbReference type="Gene3D" id="1.10.10.10">
    <property type="entry name" value="Winged helix-like DNA-binding domain superfamily/Winged helix DNA-binding domain"/>
    <property type="match status" value="1"/>
</dbReference>
<dbReference type="HAMAP" id="MF_00621">
    <property type="entry name" value="HTH_type_CodY"/>
    <property type="match status" value="1"/>
</dbReference>
<dbReference type="InterPro" id="IPR014154">
    <property type="entry name" value="CodY"/>
</dbReference>
<dbReference type="InterPro" id="IPR029016">
    <property type="entry name" value="GAF-like_dom_sf"/>
</dbReference>
<dbReference type="InterPro" id="IPR013198">
    <property type="entry name" value="GTP_trans_reg_CodY_C"/>
</dbReference>
<dbReference type="InterPro" id="IPR010312">
    <property type="entry name" value="Transc_reg_CodY_N"/>
</dbReference>
<dbReference type="InterPro" id="IPR036388">
    <property type="entry name" value="WH-like_DNA-bd_sf"/>
</dbReference>
<dbReference type="InterPro" id="IPR036390">
    <property type="entry name" value="WH_DNA-bd_sf"/>
</dbReference>
<dbReference type="NCBIfam" id="TIGR02787">
    <property type="entry name" value="codY_Gpos"/>
    <property type="match status" value="1"/>
</dbReference>
<dbReference type="NCBIfam" id="NF003170">
    <property type="entry name" value="PRK04158.1"/>
    <property type="match status" value="1"/>
</dbReference>
<dbReference type="PANTHER" id="PTHR40062:SF1">
    <property type="entry name" value="GLOBAL TRANSCRIPTIONAL REGULATOR CODY"/>
    <property type="match status" value="1"/>
</dbReference>
<dbReference type="PANTHER" id="PTHR40062">
    <property type="entry name" value="GTP-SENSING TRANSCRIPTIONAL PLEIOTROPIC REPRESSOR CODY"/>
    <property type="match status" value="1"/>
</dbReference>
<dbReference type="Pfam" id="PF06018">
    <property type="entry name" value="CodY"/>
    <property type="match status" value="1"/>
</dbReference>
<dbReference type="Pfam" id="PF08222">
    <property type="entry name" value="HTH_CodY"/>
    <property type="match status" value="1"/>
</dbReference>
<dbReference type="PIRSF" id="PIRSF011572">
    <property type="entry name" value="GTP_sensing_CodY"/>
    <property type="match status" value="1"/>
</dbReference>
<dbReference type="SUPFAM" id="SSF46785">
    <property type="entry name" value="Winged helix' DNA-binding domain"/>
    <property type="match status" value="1"/>
</dbReference>
<keyword id="KW-0963">Cytoplasm</keyword>
<keyword id="KW-0238">DNA-binding</keyword>
<keyword id="KW-0597">Phosphoprotein</keyword>
<keyword id="KW-0678">Repressor</keyword>
<keyword id="KW-0804">Transcription</keyword>
<keyword id="KW-0805">Transcription regulation</keyword>